<comment type="function">
    <text>Involved in the cellular defense against the biological effects of O6-methylguanine (O6-MeG) and O4-methylthymine (O4-MeT) in DNA. Repairs the methylated nucleobase in DNA by stoichiometrically transferring the methyl group to a cysteine residue in the enzyme. This is a suicide reaction: the enzyme is irreversibly inactivated.</text>
</comment>
<comment type="catalytic activity">
    <reaction evidence="3">
        <text>a 6-O-methyl-2'-deoxyguanosine in DNA + L-cysteinyl-[protein] = S-methyl-L-cysteinyl-[protein] + a 2'-deoxyguanosine in DNA</text>
        <dbReference type="Rhea" id="RHEA:24000"/>
        <dbReference type="Rhea" id="RHEA-COMP:10131"/>
        <dbReference type="Rhea" id="RHEA-COMP:10132"/>
        <dbReference type="Rhea" id="RHEA-COMP:11367"/>
        <dbReference type="Rhea" id="RHEA-COMP:11368"/>
        <dbReference type="ChEBI" id="CHEBI:29950"/>
        <dbReference type="ChEBI" id="CHEBI:82612"/>
        <dbReference type="ChEBI" id="CHEBI:85445"/>
        <dbReference type="ChEBI" id="CHEBI:85448"/>
        <dbReference type="EC" id="2.1.1.63"/>
    </reaction>
</comment>
<comment type="catalytic activity">
    <reaction evidence="3">
        <text>a 4-O-methyl-thymidine in DNA + L-cysteinyl-[protein] = a thymidine in DNA + S-methyl-L-cysteinyl-[protein]</text>
        <dbReference type="Rhea" id="RHEA:53428"/>
        <dbReference type="Rhea" id="RHEA-COMP:10131"/>
        <dbReference type="Rhea" id="RHEA-COMP:10132"/>
        <dbReference type="Rhea" id="RHEA-COMP:13555"/>
        <dbReference type="Rhea" id="RHEA-COMP:13556"/>
        <dbReference type="ChEBI" id="CHEBI:29950"/>
        <dbReference type="ChEBI" id="CHEBI:82612"/>
        <dbReference type="ChEBI" id="CHEBI:137386"/>
        <dbReference type="ChEBI" id="CHEBI:137387"/>
        <dbReference type="EC" id="2.1.1.63"/>
    </reaction>
</comment>
<comment type="cofactor">
    <cofactor evidence="1">
        <name>Zn(2+)</name>
        <dbReference type="ChEBI" id="CHEBI:29105"/>
    </cofactor>
    <text evidence="1">Binds 1 zinc ion.</text>
</comment>
<comment type="subcellular location">
    <subcellularLocation>
        <location evidence="5">Nucleus</location>
    </subcellularLocation>
</comment>
<comment type="miscellaneous">
    <text>This enzyme catalyzes only one turnover and therefore is not strictly catalytic. According to one definition, an enzyme is a biocatalyst that acts repeatedly and over many reaction cycles.</text>
</comment>
<comment type="similarity">
    <text evidence="5">Belongs to the MGMT family.</text>
</comment>
<protein>
    <recommendedName>
        <fullName>Methylated-DNA--protein-cysteine methyltransferase</fullName>
        <ecNumber>2.1.1.63</ecNumber>
    </recommendedName>
    <alternativeName>
        <fullName>6-O-methylguanine-DNA methyltransferase</fullName>
        <shortName>MGMT</shortName>
    </alternativeName>
    <alternativeName>
        <fullName>O-6-methylguanine-DNA-alkyltransferase</fullName>
    </alternativeName>
</protein>
<proteinExistence type="evidence at protein level"/>
<dbReference type="EC" id="2.1.1.63"/>
<dbReference type="EMBL" id="M84524">
    <property type="protein sequence ID" value="AAA37126.1"/>
    <property type="molecule type" value="mRNA"/>
</dbReference>
<dbReference type="EMBL" id="AB092489">
    <property type="protein sequence ID" value="BAC16763.1"/>
    <property type="molecule type" value="mRNA"/>
</dbReference>
<dbReference type="EMBL" id="AB092490">
    <property type="protein sequence ID" value="BAC16764.1"/>
    <property type="molecule type" value="mRNA"/>
</dbReference>
<dbReference type="EMBL" id="BC031888">
    <property type="protein sequence ID" value="AAH31888.1"/>
    <property type="molecule type" value="mRNA"/>
</dbReference>
<dbReference type="CCDS" id="CCDS21945.1"/>
<dbReference type="PIR" id="A41809">
    <property type="entry name" value="A41809"/>
</dbReference>
<dbReference type="RefSeq" id="NP_001363966.1">
    <property type="nucleotide sequence ID" value="NM_001377037.2"/>
</dbReference>
<dbReference type="RefSeq" id="NP_001399633.1">
    <property type="nucleotide sequence ID" value="NM_001412704.1"/>
</dbReference>
<dbReference type="RefSeq" id="NP_032624.1">
    <property type="nucleotide sequence ID" value="NM_008598.4"/>
</dbReference>
<dbReference type="RefSeq" id="XP_006507472.1">
    <property type="nucleotide sequence ID" value="XM_006507409.4"/>
</dbReference>
<dbReference type="RefSeq" id="XP_006507473.1">
    <property type="nucleotide sequence ID" value="XM_006507410.3"/>
</dbReference>
<dbReference type="SMR" id="P26187"/>
<dbReference type="BioGRID" id="201415">
    <property type="interactions" value="2"/>
</dbReference>
<dbReference type="FunCoup" id="P26187">
    <property type="interactions" value="225"/>
</dbReference>
<dbReference type="STRING" id="10090.ENSMUSP00000080224"/>
<dbReference type="iPTMnet" id="P26187"/>
<dbReference type="PhosphoSitePlus" id="P26187"/>
<dbReference type="PaxDb" id="10090-ENSMUSP00000080224"/>
<dbReference type="PeptideAtlas" id="P26187"/>
<dbReference type="ProteomicsDB" id="292236"/>
<dbReference type="Pumba" id="P26187"/>
<dbReference type="Antibodypedia" id="32507">
    <property type="antibodies" value="940 antibodies from 42 providers"/>
</dbReference>
<dbReference type="DNASU" id="17314"/>
<dbReference type="Ensembl" id="ENSMUST00000081510.4">
    <property type="protein sequence ID" value="ENSMUSP00000080224.3"/>
    <property type="gene ID" value="ENSMUSG00000054612.5"/>
</dbReference>
<dbReference type="GeneID" id="17314"/>
<dbReference type="KEGG" id="mmu:17314"/>
<dbReference type="UCSC" id="uc009keq.1">
    <property type="organism name" value="mouse"/>
</dbReference>
<dbReference type="AGR" id="MGI:96977"/>
<dbReference type="CTD" id="4255"/>
<dbReference type="MGI" id="MGI:96977">
    <property type="gene designation" value="Mgmt"/>
</dbReference>
<dbReference type="VEuPathDB" id="HostDB:ENSMUSG00000054612"/>
<dbReference type="eggNOG" id="KOG4062">
    <property type="taxonomic scope" value="Eukaryota"/>
</dbReference>
<dbReference type="GeneTree" id="ENSGT00390000015799"/>
<dbReference type="HOGENOM" id="CLU_000445_52_2_1"/>
<dbReference type="InParanoid" id="P26187"/>
<dbReference type="OMA" id="EPLAQCA"/>
<dbReference type="OrthoDB" id="1907495at2759"/>
<dbReference type="PhylomeDB" id="P26187"/>
<dbReference type="TreeFam" id="TF314064"/>
<dbReference type="BioGRID-ORCS" id="17314">
    <property type="hits" value="6 hits in 118 CRISPR screens"/>
</dbReference>
<dbReference type="ChiTaRS" id="Mgmt">
    <property type="organism name" value="mouse"/>
</dbReference>
<dbReference type="PRO" id="PR:P26187"/>
<dbReference type="Proteomes" id="UP000000589">
    <property type="component" value="Chromosome 7"/>
</dbReference>
<dbReference type="RNAct" id="P26187">
    <property type="molecule type" value="protein"/>
</dbReference>
<dbReference type="Bgee" id="ENSMUSG00000054612">
    <property type="expression patterns" value="Expressed in proximal tubule and 66 other cell types or tissues"/>
</dbReference>
<dbReference type="GO" id="GO:0005654">
    <property type="term" value="C:nucleoplasm"/>
    <property type="evidence" value="ECO:0007669"/>
    <property type="project" value="Ensembl"/>
</dbReference>
<dbReference type="GO" id="GO:0003677">
    <property type="term" value="F:DNA binding"/>
    <property type="evidence" value="ECO:0007669"/>
    <property type="project" value="UniProtKB-KW"/>
</dbReference>
<dbReference type="GO" id="GO:0046872">
    <property type="term" value="F:metal ion binding"/>
    <property type="evidence" value="ECO:0007669"/>
    <property type="project" value="UniProtKB-KW"/>
</dbReference>
<dbReference type="GO" id="GO:0003908">
    <property type="term" value="F:methylated-DNA-[protein]-cysteine S-methyltransferase activity"/>
    <property type="evidence" value="ECO:0007669"/>
    <property type="project" value="UniProtKB-EC"/>
</dbReference>
<dbReference type="GO" id="GO:0008168">
    <property type="term" value="F:methyltransferase activity"/>
    <property type="evidence" value="ECO:0000314"/>
    <property type="project" value="MGI"/>
</dbReference>
<dbReference type="GO" id="GO:0006307">
    <property type="term" value="P:DNA alkylation repair"/>
    <property type="evidence" value="ECO:0000314"/>
    <property type="project" value="MGI"/>
</dbReference>
<dbReference type="GO" id="GO:0006974">
    <property type="term" value="P:DNA damage response"/>
    <property type="evidence" value="ECO:0000315"/>
    <property type="project" value="MGI"/>
</dbReference>
<dbReference type="GO" id="GO:0006281">
    <property type="term" value="P:DNA repair"/>
    <property type="evidence" value="ECO:0000315"/>
    <property type="project" value="MGI"/>
</dbReference>
<dbReference type="GO" id="GO:0032259">
    <property type="term" value="P:methylation"/>
    <property type="evidence" value="ECO:0007669"/>
    <property type="project" value="UniProtKB-KW"/>
</dbReference>
<dbReference type="GO" id="GO:0043066">
    <property type="term" value="P:negative regulation of apoptotic process"/>
    <property type="evidence" value="ECO:0007669"/>
    <property type="project" value="Ensembl"/>
</dbReference>
<dbReference type="GO" id="GO:2000781">
    <property type="term" value="P:positive regulation of double-strand break repair"/>
    <property type="evidence" value="ECO:0007669"/>
    <property type="project" value="Ensembl"/>
</dbReference>
<dbReference type="CDD" id="cd06445">
    <property type="entry name" value="ATase"/>
    <property type="match status" value="1"/>
</dbReference>
<dbReference type="FunFam" id="1.10.10.10:FF:000214">
    <property type="entry name" value="Methylated-DNA--protein-cysteine methyltransferase"/>
    <property type="match status" value="1"/>
</dbReference>
<dbReference type="FunFam" id="3.30.160.70:FF:000001">
    <property type="entry name" value="Methylated-DNA--protein-cysteine methyltransferase"/>
    <property type="match status" value="1"/>
</dbReference>
<dbReference type="Gene3D" id="3.30.160.70">
    <property type="entry name" value="Methylated DNA-protein cysteine methyltransferase domain"/>
    <property type="match status" value="1"/>
</dbReference>
<dbReference type="Gene3D" id="1.10.10.10">
    <property type="entry name" value="Winged helix-like DNA-binding domain superfamily/Winged helix DNA-binding domain"/>
    <property type="match status" value="1"/>
</dbReference>
<dbReference type="InterPro" id="IPR001497">
    <property type="entry name" value="MethylDNA_cys_MeTrfase_AS"/>
</dbReference>
<dbReference type="InterPro" id="IPR014048">
    <property type="entry name" value="MethylDNA_cys_MeTrfase_DNA-bd"/>
</dbReference>
<dbReference type="InterPro" id="IPR036217">
    <property type="entry name" value="MethylDNA_cys_MeTrfase_DNAb"/>
</dbReference>
<dbReference type="InterPro" id="IPR008332">
    <property type="entry name" value="MethylG_MeTrfase_N"/>
</dbReference>
<dbReference type="InterPro" id="IPR036631">
    <property type="entry name" value="MGMT_N_sf"/>
</dbReference>
<dbReference type="InterPro" id="IPR036388">
    <property type="entry name" value="WH-like_DNA-bd_sf"/>
</dbReference>
<dbReference type="NCBIfam" id="TIGR00589">
    <property type="entry name" value="ogt"/>
    <property type="match status" value="1"/>
</dbReference>
<dbReference type="PANTHER" id="PTHR46460">
    <property type="entry name" value="METHYLATED-DNA--PROTEIN-CYSTEINE METHYLTRANSFERASE"/>
    <property type="match status" value="1"/>
</dbReference>
<dbReference type="PANTHER" id="PTHR46460:SF1">
    <property type="entry name" value="METHYLATED-DNA--PROTEIN-CYSTEINE METHYLTRANSFERASE"/>
    <property type="match status" value="1"/>
</dbReference>
<dbReference type="Pfam" id="PF01035">
    <property type="entry name" value="DNA_binding_1"/>
    <property type="match status" value="1"/>
</dbReference>
<dbReference type="Pfam" id="PF02870">
    <property type="entry name" value="Methyltransf_1N"/>
    <property type="match status" value="1"/>
</dbReference>
<dbReference type="SUPFAM" id="SSF53155">
    <property type="entry name" value="Methylated DNA-protein cysteine methyltransferase domain"/>
    <property type="match status" value="1"/>
</dbReference>
<dbReference type="SUPFAM" id="SSF46767">
    <property type="entry name" value="Methylated DNA-protein cysteine methyltransferase, C-terminal domain"/>
    <property type="match status" value="1"/>
</dbReference>
<dbReference type="PROSITE" id="PS00374">
    <property type="entry name" value="MGMT"/>
    <property type="match status" value="1"/>
</dbReference>
<sequence>MAETCKMKYSVLDSPLGKMELSGCERGLHGIRLLSGKTPNTDPTEAPATPEVLGGPEGVPEPLVQCTAWLEAYFREPAATEGLPLPALHHPVFQQDSFTRQVLWKLLKVVKFGETVSYQQLAALAGNPKAARAVGGAMRSNPVPILIPCHRVVRSDGAIGHYSGGGQAVKEWLLAHEGIPTGQPASKGLGLTGTWLKSSFESTSSEPSGRN</sequence>
<accession>P26187</accession>
<accession>Q54A49</accession>
<feature type="chain" id="PRO_0000139360" description="Methylated-DNA--protein-cysteine methyltransferase">
    <location>
        <begin position="1"/>
        <end position="211"/>
    </location>
</feature>
<feature type="region of interest" description="Disordered" evidence="4">
    <location>
        <begin position="35"/>
        <end position="57"/>
    </location>
</feature>
<feature type="active site" description="Nucleophile; methyl group acceptor" evidence="3">
    <location>
        <position position="149"/>
    </location>
</feature>
<feature type="binding site" evidence="1">
    <location>
        <position position="5"/>
    </location>
    <ligand>
        <name>Zn(2+)</name>
        <dbReference type="ChEBI" id="CHEBI:29105"/>
    </ligand>
</feature>
<feature type="binding site" evidence="1">
    <location>
        <position position="24"/>
    </location>
    <ligand>
        <name>Zn(2+)</name>
        <dbReference type="ChEBI" id="CHEBI:29105"/>
    </ligand>
</feature>
<feature type="binding site" evidence="1">
    <location>
        <position position="29"/>
    </location>
    <ligand>
        <name>Zn(2+)</name>
        <dbReference type="ChEBI" id="CHEBI:29105"/>
    </ligand>
</feature>
<feature type="binding site" evidence="1">
    <location>
        <position position="89"/>
    </location>
    <ligand>
        <name>Zn(2+)</name>
        <dbReference type="ChEBI" id="CHEBI:29105"/>
    </ligand>
</feature>
<feature type="binding site" evidence="1">
    <location>
        <position position="99"/>
    </location>
    <ligand>
        <name>DNA</name>
        <dbReference type="ChEBI" id="CHEBI:16991"/>
    </ligand>
</feature>
<feature type="binding site" evidence="1">
    <location>
        <position position="118"/>
    </location>
    <ligand>
        <name>DNA</name>
        <dbReference type="ChEBI" id="CHEBI:16991"/>
    </ligand>
</feature>
<feature type="binding site" evidence="1">
    <location>
        <position position="119"/>
    </location>
    <ligand>
        <name>DNA</name>
        <dbReference type="ChEBI" id="CHEBI:16991"/>
    </ligand>
</feature>
<feature type="binding site" evidence="1">
    <location>
        <position position="127"/>
    </location>
    <ligand>
        <name>DNA</name>
        <dbReference type="ChEBI" id="CHEBI:16991"/>
    </ligand>
</feature>
<feature type="binding site" evidence="1">
    <location>
        <position position="132"/>
    </location>
    <ligand>
        <name>DNA</name>
        <dbReference type="ChEBI" id="CHEBI:16991"/>
    </ligand>
</feature>
<feature type="binding site" evidence="1">
    <location>
        <position position="155"/>
    </location>
    <ligand>
        <name>DNA</name>
        <dbReference type="ChEBI" id="CHEBI:16991"/>
    </ligand>
</feature>
<feature type="modified residue" description="Phosphoserine" evidence="2">
    <location>
        <position position="14"/>
    </location>
</feature>
<feature type="modified residue" description="Phosphoserine" evidence="2">
    <location>
        <position position="205"/>
    </location>
</feature>
<evidence type="ECO:0000250" key="1"/>
<evidence type="ECO:0000250" key="2">
    <source>
        <dbReference type="UniProtKB" id="P16455"/>
    </source>
</evidence>
<evidence type="ECO:0000255" key="3">
    <source>
        <dbReference type="PROSITE-ProRule" id="PRU10017"/>
    </source>
</evidence>
<evidence type="ECO:0000256" key="4">
    <source>
        <dbReference type="SAM" id="MobiDB-lite"/>
    </source>
</evidence>
<evidence type="ECO:0000305" key="5"/>
<name>MGMT_MOUSE</name>
<reference key="1">
    <citation type="journal article" date="1992" name="Biochemistry">
        <title>Characterization of cDNA encoding mouse DNA repair protein O6-methylguanine-DNA methyltransferase and high-level expression of the wild-type and mutant proteins in Escherichia coli.</title>
        <authorList>
            <person name="Shiota S."/>
            <person name="von Wronski M.A."/>
            <person name="Tano K."/>
            <person name="Bigner D.D."/>
            <person name="Brent T.P."/>
            <person name="Mitra S."/>
        </authorList>
    </citation>
    <scope>NUCLEOTIDE SEQUENCE [MRNA]</scope>
    <scope>PARTIAL PROTEIN SEQUENCE</scope>
</reference>
<reference key="2">
    <citation type="submission" date="2002-09" db="EMBL/GenBank/DDBJ databases">
        <title>MGMT sequence of B6 and C3H mice.</title>
        <authorList>
            <person name="Shimada Y."/>
            <person name="Kakinuma S."/>
            <person name="Kubo A."/>
            <person name="Nishimura M."/>
        </authorList>
    </citation>
    <scope>NUCLEOTIDE SEQUENCE [MRNA]</scope>
    <source>
        <strain>C3H/HeJ</strain>
        <strain>C57BL/6J</strain>
        <tissue>Thymus</tissue>
    </source>
</reference>
<reference key="3">
    <citation type="journal article" date="2004" name="Genome Res.">
        <title>The status, quality, and expansion of the NIH full-length cDNA project: the Mammalian Gene Collection (MGC).</title>
        <authorList>
            <consortium name="The MGC Project Team"/>
        </authorList>
    </citation>
    <scope>NUCLEOTIDE SEQUENCE [LARGE SCALE MRNA]</scope>
    <source>
        <strain>FVB/N-3</strain>
        <tissue>Mammary gland</tissue>
    </source>
</reference>
<reference key="4">
    <citation type="journal article" date="2010" name="Cell">
        <title>A tissue-specific atlas of mouse protein phosphorylation and expression.</title>
        <authorList>
            <person name="Huttlin E.L."/>
            <person name="Jedrychowski M.P."/>
            <person name="Elias J.E."/>
            <person name="Goswami T."/>
            <person name="Rad R."/>
            <person name="Beausoleil S.A."/>
            <person name="Villen J."/>
            <person name="Haas W."/>
            <person name="Sowa M.E."/>
            <person name="Gygi S.P."/>
        </authorList>
    </citation>
    <scope>IDENTIFICATION BY MASS SPECTROMETRY [LARGE SCALE ANALYSIS]</scope>
    <source>
        <tissue>Brown adipose tissue</tissue>
    </source>
</reference>
<organism>
    <name type="scientific">Mus musculus</name>
    <name type="common">Mouse</name>
    <dbReference type="NCBI Taxonomy" id="10090"/>
    <lineage>
        <taxon>Eukaryota</taxon>
        <taxon>Metazoa</taxon>
        <taxon>Chordata</taxon>
        <taxon>Craniata</taxon>
        <taxon>Vertebrata</taxon>
        <taxon>Euteleostomi</taxon>
        <taxon>Mammalia</taxon>
        <taxon>Eutheria</taxon>
        <taxon>Euarchontoglires</taxon>
        <taxon>Glires</taxon>
        <taxon>Rodentia</taxon>
        <taxon>Myomorpha</taxon>
        <taxon>Muroidea</taxon>
        <taxon>Muridae</taxon>
        <taxon>Murinae</taxon>
        <taxon>Mus</taxon>
        <taxon>Mus</taxon>
    </lineage>
</organism>
<gene>
    <name type="primary">Mgmt</name>
</gene>
<keyword id="KW-0903">Direct protein sequencing</keyword>
<keyword id="KW-0227">DNA damage</keyword>
<keyword id="KW-0234">DNA repair</keyword>
<keyword id="KW-0238">DNA-binding</keyword>
<keyword id="KW-0479">Metal-binding</keyword>
<keyword id="KW-0489">Methyltransferase</keyword>
<keyword id="KW-0539">Nucleus</keyword>
<keyword id="KW-0597">Phosphoprotein</keyword>
<keyword id="KW-1185">Reference proteome</keyword>
<keyword id="KW-0808">Transferase</keyword>
<keyword id="KW-0862">Zinc</keyword>